<protein>
    <recommendedName>
        <fullName evidence="1">Large ribosomal subunit protein uL2</fullName>
    </recommendedName>
    <alternativeName>
        <fullName evidence="3">50S ribosomal protein L2</fullName>
    </alternativeName>
</protein>
<keyword id="KW-0687">Ribonucleoprotein</keyword>
<keyword id="KW-0689">Ribosomal protein</keyword>
<keyword id="KW-0694">RNA-binding</keyword>
<keyword id="KW-0699">rRNA-binding</keyword>
<sequence length="287" mass="31504">MGTRSYRPYTPSTRQVTISDFAEITKTEPEKSLTVYKHRAKGRNNQGRITSRRRGGGHKRLYRIIDFKRDKRSIPATVIAIEYDPNRNARIALVSYEDGEKRYILHPNNLKVGTVIIAGPESPIEDGNALPLANIPLGTSVHNVELKAGKGGQIVRSAGATAQVVAKEGNYVTLKLPSGEVRLIRRECYATIGQVGNTDARNLSAGKAGRNRWKGRRPKVRGSVMNPVDHPHGGGEGRAPIGRSGPVTPWGKPTLGAKTRKPKKASSKLIIRRRRKSSKRGRGGRES</sequence>
<proteinExistence type="inferred from homology"/>
<name>RL2_TRIV2</name>
<dbReference type="EMBL" id="CP000117">
    <property type="protein sequence ID" value="ABA20318.1"/>
    <property type="molecule type" value="Genomic_DNA"/>
</dbReference>
<dbReference type="RefSeq" id="WP_010998350.1">
    <property type="nucleotide sequence ID" value="NC_007413.1"/>
</dbReference>
<dbReference type="SMR" id="Q3MFB8"/>
<dbReference type="STRING" id="240292.Ava_0694"/>
<dbReference type="GeneID" id="58723352"/>
<dbReference type="KEGG" id="ava:Ava_0694"/>
<dbReference type="eggNOG" id="COG0090">
    <property type="taxonomic scope" value="Bacteria"/>
</dbReference>
<dbReference type="HOGENOM" id="CLU_036235_2_1_3"/>
<dbReference type="Proteomes" id="UP000002533">
    <property type="component" value="Chromosome"/>
</dbReference>
<dbReference type="GO" id="GO:0015934">
    <property type="term" value="C:large ribosomal subunit"/>
    <property type="evidence" value="ECO:0007669"/>
    <property type="project" value="InterPro"/>
</dbReference>
<dbReference type="GO" id="GO:0019843">
    <property type="term" value="F:rRNA binding"/>
    <property type="evidence" value="ECO:0007669"/>
    <property type="project" value="UniProtKB-UniRule"/>
</dbReference>
<dbReference type="GO" id="GO:0003735">
    <property type="term" value="F:structural constituent of ribosome"/>
    <property type="evidence" value="ECO:0007669"/>
    <property type="project" value="InterPro"/>
</dbReference>
<dbReference type="GO" id="GO:0016740">
    <property type="term" value="F:transferase activity"/>
    <property type="evidence" value="ECO:0007669"/>
    <property type="project" value="InterPro"/>
</dbReference>
<dbReference type="GO" id="GO:0006412">
    <property type="term" value="P:translation"/>
    <property type="evidence" value="ECO:0007669"/>
    <property type="project" value="UniProtKB-UniRule"/>
</dbReference>
<dbReference type="FunFam" id="2.30.30.30:FF:000001">
    <property type="entry name" value="50S ribosomal protein L2"/>
    <property type="match status" value="1"/>
</dbReference>
<dbReference type="FunFam" id="2.40.50.140:FF:000003">
    <property type="entry name" value="50S ribosomal protein L2"/>
    <property type="match status" value="1"/>
</dbReference>
<dbReference type="FunFam" id="4.10.950.10:FF:000001">
    <property type="entry name" value="50S ribosomal protein L2"/>
    <property type="match status" value="1"/>
</dbReference>
<dbReference type="Gene3D" id="2.30.30.30">
    <property type="match status" value="1"/>
</dbReference>
<dbReference type="Gene3D" id="2.40.50.140">
    <property type="entry name" value="Nucleic acid-binding proteins"/>
    <property type="match status" value="1"/>
</dbReference>
<dbReference type="Gene3D" id="4.10.950.10">
    <property type="entry name" value="Ribosomal protein L2, domain 3"/>
    <property type="match status" value="1"/>
</dbReference>
<dbReference type="HAMAP" id="MF_01320_B">
    <property type="entry name" value="Ribosomal_uL2_B"/>
    <property type="match status" value="1"/>
</dbReference>
<dbReference type="InterPro" id="IPR012340">
    <property type="entry name" value="NA-bd_OB-fold"/>
</dbReference>
<dbReference type="InterPro" id="IPR014722">
    <property type="entry name" value="Rib_uL2_dom2"/>
</dbReference>
<dbReference type="InterPro" id="IPR002171">
    <property type="entry name" value="Ribosomal_uL2"/>
</dbReference>
<dbReference type="InterPro" id="IPR005880">
    <property type="entry name" value="Ribosomal_uL2_bac/org-type"/>
</dbReference>
<dbReference type="InterPro" id="IPR022669">
    <property type="entry name" value="Ribosomal_uL2_C"/>
</dbReference>
<dbReference type="InterPro" id="IPR022671">
    <property type="entry name" value="Ribosomal_uL2_CS"/>
</dbReference>
<dbReference type="InterPro" id="IPR014726">
    <property type="entry name" value="Ribosomal_uL2_dom3"/>
</dbReference>
<dbReference type="InterPro" id="IPR022666">
    <property type="entry name" value="Ribosomal_uL2_RNA-bd_dom"/>
</dbReference>
<dbReference type="InterPro" id="IPR008991">
    <property type="entry name" value="Translation_prot_SH3-like_sf"/>
</dbReference>
<dbReference type="NCBIfam" id="TIGR01171">
    <property type="entry name" value="rplB_bact"/>
    <property type="match status" value="1"/>
</dbReference>
<dbReference type="PANTHER" id="PTHR13691:SF5">
    <property type="entry name" value="LARGE RIBOSOMAL SUBUNIT PROTEIN UL2M"/>
    <property type="match status" value="1"/>
</dbReference>
<dbReference type="PANTHER" id="PTHR13691">
    <property type="entry name" value="RIBOSOMAL PROTEIN L2"/>
    <property type="match status" value="1"/>
</dbReference>
<dbReference type="Pfam" id="PF00181">
    <property type="entry name" value="Ribosomal_L2"/>
    <property type="match status" value="1"/>
</dbReference>
<dbReference type="Pfam" id="PF03947">
    <property type="entry name" value="Ribosomal_L2_C"/>
    <property type="match status" value="1"/>
</dbReference>
<dbReference type="PIRSF" id="PIRSF002158">
    <property type="entry name" value="Ribosomal_L2"/>
    <property type="match status" value="1"/>
</dbReference>
<dbReference type="SMART" id="SM01383">
    <property type="entry name" value="Ribosomal_L2"/>
    <property type="match status" value="1"/>
</dbReference>
<dbReference type="SMART" id="SM01382">
    <property type="entry name" value="Ribosomal_L2_C"/>
    <property type="match status" value="1"/>
</dbReference>
<dbReference type="SUPFAM" id="SSF50249">
    <property type="entry name" value="Nucleic acid-binding proteins"/>
    <property type="match status" value="1"/>
</dbReference>
<dbReference type="SUPFAM" id="SSF50104">
    <property type="entry name" value="Translation proteins SH3-like domain"/>
    <property type="match status" value="1"/>
</dbReference>
<dbReference type="PROSITE" id="PS00467">
    <property type="entry name" value="RIBOSOMAL_L2"/>
    <property type="match status" value="1"/>
</dbReference>
<accession>Q3MFB8</accession>
<reference key="1">
    <citation type="journal article" date="2014" name="Stand. Genomic Sci.">
        <title>Complete genome sequence of Anabaena variabilis ATCC 29413.</title>
        <authorList>
            <person name="Thiel T."/>
            <person name="Pratte B.S."/>
            <person name="Zhong J."/>
            <person name="Goodwin L."/>
            <person name="Copeland A."/>
            <person name="Lucas S."/>
            <person name="Han C."/>
            <person name="Pitluck S."/>
            <person name="Land M.L."/>
            <person name="Kyrpides N.C."/>
            <person name="Woyke T."/>
        </authorList>
    </citation>
    <scope>NUCLEOTIDE SEQUENCE [LARGE SCALE GENOMIC DNA]</scope>
    <source>
        <strain>ATCC 29413 / PCC 7937</strain>
    </source>
</reference>
<evidence type="ECO:0000255" key="1">
    <source>
        <dbReference type="HAMAP-Rule" id="MF_01320"/>
    </source>
</evidence>
<evidence type="ECO:0000256" key="2">
    <source>
        <dbReference type="SAM" id="MobiDB-lite"/>
    </source>
</evidence>
<evidence type="ECO:0000305" key="3"/>
<feature type="chain" id="PRO_0000237143" description="Large ribosomal subunit protein uL2">
    <location>
        <begin position="1"/>
        <end position="287"/>
    </location>
</feature>
<feature type="region of interest" description="Disordered" evidence="2">
    <location>
        <begin position="203"/>
        <end position="287"/>
    </location>
</feature>
<feature type="compositionally biased region" description="Basic residues" evidence="2">
    <location>
        <begin position="209"/>
        <end position="220"/>
    </location>
</feature>
<feature type="compositionally biased region" description="Basic residues" evidence="2">
    <location>
        <begin position="258"/>
        <end position="287"/>
    </location>
</feature>
<gene>
    <name evidence="1" type="primary">rplB</name>
    <name evidence="1" type="synonym">rpl2</name>
    <name type="ordered locus">Ava_0694</name>
</gene>
<comment type="function">
    <text evidence="1">One of the primary rRNA binding proteins. Required for association of the 30S and 50S subunits to form the 70S ribosome, for tRNA binding and peptide bond formation. It has been suggested to have peptidyltransferase activity; this is somewhat controversial. Makes several contacts with the 16S rRNA in the 70S ribosome.</text>
</comment>
<comment type="subunit">
    <text evidence="1">Part of the 50S ribosomal subunit. Forms a bridge to the 30S subunit in the 70S ribosome.</text>
</comment>
<comment type="similarity">
    <text evidence="1">Belongs to the universal ribosomal protein uL2 family.</text>
</comment>
<organism>
    <name type="scientific">Trichormus variabilis (strain ATCC 29413 / PCC 7937)</name>
    <name type="common">Anabaena variabilis</name>
    <dbReference type="NCBI Taxonomy" id="240292"/>
    <lineage>
        <taxon>Bacteria</taxon>
        <taxon>Bacillati</taxon>
        <taxon>Cyanobacteriota</taxon>
        <taxon>Cyanophyceae</taxon>
        <taxon>Nostocales</taxon>
        <taxon>Nostocaceae</taxon>
        <taxon>Trichormus</taxon>
    </lineage>
</organism>